<gene>
    <name evidence="1" type="primary">deoB</name>
    <name type="ordered locus">SARI_03009</name>
</gene>
<dbReference type="EC" id="5.4.2.7" evidence="1"/>
<dbReference type="EMBL" id="CP000880">
    <property type="protein sequence ID" value="ABX22853.1"/>
    <property type="molecule type" value="Genomic_DNA"/>
</dbReference>
<dbReference type="SMR" id="A9MRA5"/>
<dbReference type="STRING" id="41514.SARI_03009"/>
<dbReference type="KEGG" id="ses:SARI_03009"/>
<dbReference type="HOGENOM" id="CLU_053861_0_0_6"/>
<dbReference type="UniPathway" id="UPA00002">
    <property type="reaction ID" value="UER00467"/>
</dbReference>
<dbReference type="Proteomes" id="UP000002084">
    <property type="component" value="Chromosome"/>
</dbReference>
<dbReference type="GO" id="GO:0005829">
    <property type="term" value="C:cytosol"/>
    <property type="evidence" value="ECO:0007669"/>
    <property type="project" value="TreeGrafter"/>
</dbReference>
<dbReference type="GO" id="GO:0000287">
    <property type="term" value="F:magnesium ion binding"/>
    <property type="evidence" value="ECO:0007669"/>
    <property type="project" value="InterPro"/>
</dbReference>
<dbReference type="GO" id="GO:0030145">
    <property type="term" value="F:manganese ion binding"/>
    <property type="evidence" value="ECO:0007669"/>
    <property type="project" value="UniProtKB-UniRule"/>
</dbReference>
<dbReference type="GO" id="GO:0008973">
    <property type="term" value="F:phosphopentomutase activity"/>
    <property type="evidence" value="ECO:0007669"/>
    <property type="project" value="UniProtKB-UniRule"/>
</dbReference>
<dbReference type="GO" id="GO:0006018">
    <property type="term" value="P:2-deoxyribose 1-phosphate catabolic process"/>
    <property type="evidence" value="ECO:0007669"/>
    <property type="project" value="UniProtKB-UniRule"/>
</dbReference>
<dbReference type="GO" id="GO:0006015">
    <property type="term" value="P:5-phosphoribose 1-diphosphate biosynthetic process"/>
    <property type="evidence" value="ECO:0007669"/>
    <property type="project" value="UniProtKB-UniPathway"/>
</dbReference>
<dbReference type="GO" id="GO:0043094">
    <property type="term" value="P:metabolic compound salvage"/>
    <property type="evidence" value="ECO:0007669"/>
    <property type="project" value="InterPro"/>
</dbReference>
<dbReference type="GO" id="GO:0009117">
    <property type="term" value="P:nucleotide metabolic process"/>
    <property type="evidence" value="ECO:0007669"/>
    <property type="project" value="InterPro"/>
</dbReference>
<dbReference type="CDD" id="cd16009">
    <property type="entry name" value="PPM"/>
    <property type="match status" value="1"/>
</dbReference>
<dbReference type="FunFam" id="3.30.70.1250:FF:000001">
    <property type="entry name" value="Phosphopentomutase"/>
    <property type="match status" value="1"/>
</dbReference>
<dbReference type="Gene3D" id="3.40.720.10">
    <property type="entry name" value="Alkaline Phosphatase, subunit A"/>
    <property type="match status" value="1"/>
</dbReference>
<dbReference type="Gene3D" id="3.30.70.1250">
    <property type="entry name" value="Phosphopentomutase"/>
    <property type="match status" value="1"/>
</dbReference>
<dbReference type="HAMAP" id="MF_00740">
    <property type="entry name" value="Phosphopentomut"/>
    <property type="match status" value="1"/>
</dbReference>
<dbReference type="InterPro" id="IPR017850">
    <property type="entry name" value="Alkaline_phosphatase_core_sf"/>
</dbReference>
<dbReference type="InterPro" id="IPR010045">
    <property type="entry name" value="DeoB"/>
</dbReference>
<dbReference type="InterPro" id="IPR006124">
    <property type="entry name" value="Metalloenzyme"/>
</dbReference>
<dbReference type="InterPro" id="IPR024052">
    <property type="entry name" value="Phosphopentomutase_DeoB_cap_sf"/>
</dbReference>
<dbReference type="NCBIfam" id="TIGR01696">
    <property type="entry name" value="deoB"/>
    <property type="match status" value="1"/>
</dbReference>
<dbReference type="NCBIfam" id="NF003766">
    <property type="entry name" value="PRK05362.1"/>
    <property type="match status" value="1"/>
</dbReference>
<dbReference type="PANTHER" id="PTHR21110">
    <property type="entry name" value="PHOSPHOPENTOMUTASE"/>
    <property type="match status" value="1"/>
</dbReference>
<dbReference type="PANTHER" id="PTHR21110:SF0">
    <property type="entry name" value="PHOSPHOPENTOMUTASE"/>
    <property type="match status" value="1"/>
</dbReference>
<dbReference type="Pfam" id="PF01676">
    <property type="entry name" value="Metalloenzyme"/>
    <property type="match status" value="1"/>
</dbReference>
<dbReference type="PIRSF" id="PIRSF001491">
    <property type="entry name" value="Ppentomutase"/>
    <property type="match status" value="1"/>
</dbReference>
<dbReference type="SUPFAM" id="SSF53649">
    <property type="entry name" value="Alkaline phosphatase-like"/>
    <property type="match status" value="1"/>
</dbReference>
<dbReference type="SUPFAM" id="SSF143856">
    <property type="entry name" value="DeoB insert domain-like"/>
    <property type="match status" value="1"/>
</dbReference>
<reference key="1">
    <citation type="submission" date="2007-11" db="EMBL/GenBank/DDBJ databases">
        <authorList>
            <consortium name="The Salmonella enterica serovar Arizonae Genome Sequencing Project"/>
            <person name="McClelland M."/>
            <person name="Sanderson E.K."/>
            <person name="Porwollik S."/>
            <person name="Spieth J."/>
            <person name="Clifton W.S."/>
            <person name="Fulton R."/>
            <person name="Chunyan W."/>
            <person name="Wollam A."/>
            <person name="Shah N."/>
            <person name="Pepin K."/>
            <person name="Bhonagiri V."/>
            <person name="Nash W."/>
            <person name="Johnson M."/>
            <person name="Thiruvilangam P."/>
            <person name="Wilson R."/>
        </authorList>
    </citation>
    <scope>NUCLEOTIDE SEQUENCE [LARGE SCALE GENOMIC DNA]</scope>
    <source>
        <strain>ATCC BAA-731 / CDC346-86 / RSK2980</strain>
    </source>
</reference>
<organism>
    <name type="scientific">Salmonella arizonae (strain ATCC BAA-731 / CDC346-86 / RSK2980)</name>
    <dbReference type="NCBI Taxonomy" id="41514"/>
    <lineage>
        <taxon>Bacteria</taxon>
        <taxon>Pseudomonadati</taxon>
        <taxon>Pseudomonadota</taxon>
        <taxon>Gammaproteobacteria</taxon>
        <taxon>Enterobacterales</taxon>
        <taxon>Enterobacteriaceae</taxon>
        <taxon>Salmonella</taxon>
    </lineage>
</organism>
<keyword id="KW-0963">Cytoplasm</keyword>
<keyword id="KW-0413">Isomerase</keyword>
<keyword id="KW-0464">Manganese</keyword>
<keyword id="KW-0479">Metal-binding</keyword>
<keyword id="KW-1185">Reference proteome</keyword>
<feature type="chain" id="PRO_1000083438" description="Phosphopentomutase">
    <location>
        <begin position="1"/>
        <end position="407"/>
    </location>
</feature>
<feature type="binding site" evidence="1">
    <location>
        <position position="10"/>
    </location>
    <ligand>
        <name>Mn(2+)</name>
        <dbReference type="ChEBI" id="CHEBI:29035"/>
        <label>1</label>
    </ligand>
</feature>
<feature type="binding site" evidence="1">
    <location>
        <position position="306"/>
    </location>
    <ligand>
        <name>Mn(2+)</name>
        <dbReference type="ChEBI" id="CHEBI:29035"/>
        <label>2</label>
    </ligand>
</feature>
<feature type="binding site" evidence="1">
    <location>
        <position position="311"/>
    </location>
    <ligand>
        <name>Mn(2+)</name>
        <dbReference type="ChEBI" id="CHEBI:29035"/>
        <label>2</label>
    </ligand>
</feature>
<feature type="binding site" evidence="1">
    <location>
        <position position="347"/>
    </location>
    <ligand>
        <name>Mn(2+)</name>
        <dbReference type="ChEBI" id="CHEBI:29035"/>
        <label>1</label>
    </ligand>
</feature>
<feature type="binding site" evidence="1">
    <location>
        <position position="348"/>
    </location>
    <ligand>
        <name>Mn(2+)</name>
        <dbReference type="ChEBI" id="CHEBI:29035"/>
        <label>1</label>
    </ligand>
</feature>
<feature type="binding site" evidence="1">
    <location>
        <position position="359"/>
    </location>
    <ligand>
        <name>Mn(2+)</name>
        <dbReference type="ChEBI" id="CHEBI:29035"/>
        <label>2</label>
    </ligand>
</feature>
<accession>A9MRA5</accession>
<sequence length="407" mass="44174">MKRAFIMVLDSFGIGATEDADRFGDVGSDTLGHIAEACAKGEADNGRKGPLNLPNLTRLGLVKAHEGSTGKIAAGMDGNADVIGAYAWAHELSSGKDTPSGHWEIAGVPVLFDWGYFSDHENSFPQELLDKLVKRANLPGYLGNCHSSGTVILDQLGEEHMKTGKPIFYTSADSVFQIACHEETFGLDKLYELCEIAREELTEGGYNIGRVIARPFIGDKAGNFQRTGNRHDLAVEPPAPTVLQKLVDEKQGHVVSVGKIADIYANCGITKKVKATGLDALFDATIKEMKDAGDKTIVFTNFVDFDSSWGHRRDIAGYASGLELFDRRLPELMALVGEDDILILTADHGCDPSWTGTDHTREHIPVLIYGPKVKPGSLGHRETFADIGQTLASYFGTSPMDYGKNML</sequence>
<name>DEOB_SALAR</name>
<evidence type="ECO:0000255" key="1">
    <source>
        <dbReference type="HAMAP-Rule" id="MF_00740"/>
    </source>
</evidence>
<proteinExistence type="inferred from homology"/>
<protein>
    <recommendedName>
        <fullName evidence="1">Phosphopentomutase</fullName>
        <ecNumber evidence="1">5.4.2.7</ecNumber>
    </recommendedName>
    <alternativeName>
        <fullName evidence="1">Phosphodeoxyribomutase</fullName>
    </alternativeName>
</protein>
<comment type="function">
    <text evidence="1">Isomerase that catalyzes the conversion of deoxy-ribose 1-phosphate (dRib-1-P) and ribose 1-phosphate (Rib-1-P) to deoxy-ribose 5-phosphate (dRib-5-P) and ribose 5-phosphate (Rib-5-P), respectively.</text>
</comment>
<comment type="catalytic activity">
    <reaction evidence="1">
        <text>2-deoxy-alpha-D-ribose 1-phosphate = 2-deoxy-D-ribose 5-phosphate</text>
        <dbReference type="Rhea" id="RHEA:27658"/>
        <dbReference type="ChEBI" id="CHEBI:57259"/>
        <dbReference type="ChEBI" id="CHEBI:62877"/>
        <dbReference type="EC" id="5.4.2.7"/>
    </reaction>
</comment>
<comment type="catalytic activity">
    <reaction evidence="1">
        <text>alpha-D-ribose 1-phosphate = D-ribose 5-phosphate</text>
        <dbReference type="Rhea" id="RHEA:18793"/>
        <dbReference type="ChEBI" id="CHEBI:57720"/>
        <dbReference type="ChEBI" id="CHEBI:78346"/>
        <dbReference type="EC" id="5.4.2.7"/>
    </reaction>
</comment>
<comment type="cofactor">
    <cofactor evidence="1">
        <name>Mn(2+)</name>
        <dbReference type="ChEBI" id="CHEBI:29035"/>
    </cofactor>
    <text evidence="1">Binds 2 manganese ions.</text>
</comment>
<comment type="pathway">
    <text evidence="1">Carbohydrate degradation; 2-deoxy-D-ribose 1-phosphate degradation; D-glyceraldehyde 3-phosphate and acetaldehyde from 2-deoxy-alpha-D-ribose 1-phosphate: step 1/2.</text>
</comment>
<comment type="subcellular location">
    <subcellularLocation>
        <location evidence="1">Cytoplasm</location>
    </subcellularLocation>
</comment>
<comment type="similarity">
    <text evidence="1">Belongs to the phosphopentomutase family.</text>
</comment>